<keyword id="KW-0002">3D-structure</keyword>
<keyword id="KW-1003">Cell membrane</keyword>
<keyword id="KW-0903">Direct protein sequencing</keyword>
<keyword id="KW-1015">Disulfide bond</keyword>
<keyword id="KW-0325">Glycoprotein</keyword>
<keyword id="KW-0333">Golgi apparatus</keyword>
<keyword id="KW-0336">GPI-anchor</keyword>
<keyword id="KW-0391">Immunity</keyword>
<keyword id="KW-0395">Inflammatory response</keyword>
<keyword id="KW-0399">Innate immunity</keyword>
<keyword id="KW-0433">Leucine-rich repeat</keyword>
<keyword id="KW-0449">Lipoprotein</keyword>
<keyword id="KW-0472">Membrane</keyword>
<keyword id="KW-1267">Proteomics identification</keyword>
<keyword id="KW-1185">Reference proteome</keyword>
<keyword id="KW-0677">Repeat</keyword>
<keyword id="KW-0964">Secreted</keyword>
<keyword id="KW-0732">Signal</keyword>
<organism>
    <name type="scientific">Homo sapiens</name>
    <name type="common">Human</name>
    <dbReference type="NCBI Taxonomy" id="9606"/>
    <lineage>
        <taxon>Eukaryota</taxon>
        <taxon>Metazoa</taxon>
        <taxon>Chordata</taxon>
        <taxon>Craniata</taxon>
        <taxon>Vertebrata</taxon>
        <taxon>Euteleostomi</taxon>
        <taxon>Mammalia</taxon>
        <taxon>Eutheria</taxon>
        <taxon>Euarchontoglires</taxon>
        <taxon>Primates</taxon>
        <taxon>Haplorrhini</taxon>
        <taxon>Catarrhini</taxon>
        <taxon>Hominidae</taxon>
        <taxon>Homo</taxon>
    </lineage>
</organism>
<name>CD14_HUMAN</name>
<sequence length="375" mass="40076">MERASCLLLLLLPLVHVSATTPEPCELDDEDFRCVCNFSEPQPDWSEAFQCVSAVEVEIHAGGLNLEPFLKRVDADADPRQYADTVKALRVRRLTVGAAQVPAQLLVGALRVLAYSRLKELTLEDLKITGTMPPLPLEATGLALSSLRLRNVSWATGRSWLAELQQWLKPGLKVLSIAQAHSPAFSCEQVRAFPALTSLDLSDNPGLGERGLMAALCPHKFPAIQNLALRNTGMETPTGVCAALAAAGVQPHSLDLSHNSLRATVNPSAPRCMWSSALNSLNLSFAGLEQVPKGLPAKLRVLDLSCNRLNRAPQPDELPEVDNLTLDGNPFLVPGTALPHEGSMNSGVVPACARSTLSVGVSGTLVLLQGARGFA</sequence>
<reference key="1">
    <citation type="journal article" date="1988" name="J. Immunol.">
        <title>The monocyte differentiation antigen, CD14, is anchored to the cell membrane by a phosphatidylinositol linkage.</title>
        <authorList>
            <person name="Haziot A."/>
            <person name="Chen S."/>
            <person name="Ferrero E."/>
            <person name="Low M.G."/>
            <person name="Silber R."/>
            <person name="Goyert S.M."/>
        </authorList>
    </citation>
    <scope>NUCLEOTIDE SEQUENCE [MRNA]</scope>
    <scope>SUBCELLULAR LOCATION</scope>
</reference>
<reference key="2">
    <citation type="journal article" date="1988" name="Nucleic Acids Res.">
        <title>Nucleotide sequence of the gene encoding the monocyte differentiation antigen, CD14.</title>
        <authorList>
            <person name="Ferrero E."/>
            <person name="Goyert S.M."/>
        </authorList>
    </citation>
    <scope>NUCLEOTIDE SEQUENCE [GENOMIC DNA]</scope>
    <source>
        <tissue>Lymphocyte</tissue>
    </source>
</reference>
<reference key="3">
    <citation type="journal article" date="1989" name="Biochim. Biophys. Acta">
        <title>Mouse and human CD14 (myeloid cell-specific leucine-rich glycoprotein) primary structure deduced from cDNA clones.</title>
        <authorList>
            <person name="Setoguchi M."/>
            <person name="Nasu N."/>
            <person name="Yoshida S."/>
            <person name="Higuchi Y."/>
            <person name="Akizuki S."/>
            <person name="Yamamoto S."/>
        </authorList>
    </citation>
    <scope>NUCLEOTIDE SEQUENCE [MRNA]</scope>
    <source>
        <tissue>Macrophage</tissue>
    </source>
</reference>
<reference key="4">
    <citation type="journal article" date="1989" name="Blood">
        <title>Monocyte antigen CD14 is a phospholipid anchored membrane protein.</title>
        <authorList>
            <person name="Simmons D.L."/>
            <person name="Tan S."/>
            <person name="Tenen D.G."/>
            <person name="Nicholson-Weller A."/>
            <person name="Seed B."/>
        </authorList>
    </citation>
    <scope>NUCLEOTIDE SEQUENCE [MRNA]</scope>
    <scope>SUBCELLULAR LOCATION</scope>
</reference>
<reference key="5">
    <citation type="journal article" date="1998" name="Sheng Wu Hua Xue Yu Sheng Wu Wu Li Jin Zhan">
        <title>Cloning and sequencing of human CD14 gene.</title>
        <authorList>
            <person name="Long J.Y."/>
            <person name="Xue Y.N."/>
            <person name="Sun L."/>
            <person name="Wang H.X."/>
        </authorList>
    </citation>
    <scope>NUCLEOTIDE SEQUENCE [MRNA]</scope>
    <source>
        <tissue>Promyelocytic leukemia</tissue>
    </source>
</reference>
<reference key="6">
    <citation type="journal article" date="2008" name="Immunogenetics">
        <title>Natural selection in the TLR-related genes in the course of primate evolution.</title>
        <authorList>
            <person name="Nakajima T."/>
            <person name="Ohtani H."/>
            <person name="Satta Y."/>
            <person name="Uno Y."/>
            <person name="Akari H."/>
            <person name="Ishida T."/>
            <person name="Kimura A."/>
        </authorList>
    </citation>
    <scope>NUCLEOTIDE SEQUENCE [MRNA]</scope>
</reference>
<reference key="7">
    <citation type="submission" date="2003-05" db="EMBL/GenBank/DDBJ databases">
        <title>Cloning of human full-length CDSs in BD Creator(TM) system donor vector.</title>
        <authorList>
            <person name="Kalnine N."/>
            <person name="Chen X."/>
            <person name="Rolfs A."/>
            <person name="Halleck A."/>
            <person name="Hines L."/>
            <person name="Eisenstein S."/>
            <person name="Koundinya M."/>
            <person name="Raphael J."/>
            <person name="Moreira D."/>
            <person name="Kelley T."/>
            <person name="LaBaer J."/>
            <person name="Lin Y."/>
            <person name="Phelan M."/>
            <person name="Farmer A."/>
        </authorList>
    </citation>
    <scope>NUCLEOTIDE SEQUENCE [LARGE SCALE MRNA]</scope>
</reference>
<reference key="8">
    <citation type="submission" date="2005-09" db="EMBL/GenBank/DDBJ databases">
        <authorList>
            <person name="Mural R.J."/>
            <person name="Istrail S."/>
            <person name="Sutton G.G."/>
            <person name="Florea L."/>
            <person name="Halpern A.L."/>
            <person name="Mobarry C.M."/>
            <person name="Lippert R."/>
            <person name="Walenz B."/>
            <person name="Shatkay H."/>
            <person name="Dew I."/>
            <person name="Miller J.R."/>
            <person name="Flanigan M.J."/>
            <person name="Edwards N.J."/>
            <person name="Bolanos R."/>
            <person name="Fasulo D."/>
            <person name="Halldorsson B.V."/>
            <person name="Hannenhalli S."/>
            <person name="Turner R."/>
            <person name="Yooseph S."/>
            <person name="Lu F."/>
            <person name="Nusskern D.R."/>
            <person name="Shue B.C."/>
            <person name="Zheng X.H."/>
            <person name="Zhong F."/>
            <person name="Delcher A.L."/>
            <person name="Huson D.H."/>
            <person name="Kravitz S.A."/>
            <person name="Mouchard L."/>
            <person name="Reinert K."/>
            <person name="Remington K.A."/>
            <person name="Clark A.G."/>
            <person name="Waterman M.S."/>
            <person name="Eichler E.E."/>
            <person name="Adams M.D."/>
            <person name="Hunkapiller M.W."/>
            <person name="Myers E.W."/>
            <person name="Venter J.C."/>
        </authorList>
    </citation>
    <scope>NUCLEOTIDE SEQUENCE [LARGE SCALE GENOMIC DNA]</scope>
</reference>
<reference key="9">
    <citation type="journal article" date="2004" name="Genome Res.">
        <title>The status, quality, and expansion of the NIH full-length cDNA project: the Mammalian Gene Collection (MGC).</title>
        <authorList>
            <consortium name="The MGC Project Team"/>
        </authorList>
    </citation>
    <scope>NUCLEOTIDE SEQUENCE [LARGE SCALE MRNA]</scope>
    <source>
        <tissue>Brain</tissue>
    </source>
</reference>
<reference key="10">
    <citation type="submission" date="2001-07" db="EMBL/GenBank/DDBJ databases">
        <title>Expression and secretion of CD14 in glial neoplasms of the brain.</title>
        <authorList>
            <person name="Deininger M.H."/>
            <person name="Meyermann R."/>
            <person name="Schluesener H.J."/>
        </authorList>
    </citation>
    <scope>NUCLEOTIDE SEQUENCE [MRNA] OF 1-125</scope>
    <source>
        <tissue>Glioblastoma</tissue>
    </source>
</reference>
<reference key="11">
    <citation type="journal article" date="1989" name="Mol. Immunol.">
        <title>Structural relationship between the soluble and membrane-bound forms of human monocyte surface glycoprotein CD14.</title>
        <authorList>
            <person name="Bazil V."/>
            <person name="Baudys M."/>
            <person name="Hilgert I."/>
            <person name="Stefanova I."/>
            <person name="Low M.G."/>
            <person name="Zbrozek J."/>
            <person name="Horejsi V."/>
        </authorList>
    </citation>
    <scope>PROTEIN SEQUENCE OF 362-367</scope>
    <scope>SUBCELLULAR LOCATION</scope>
</reference>
<reference key="12">
    <citation type="journal article" date="1990" name="Science">
        <title>CD14, a receptor for complexes of lipopolysaccharide (LPS) and LPS binding protein.</title>
        <authorList>
            <person name="Wright S.D."/>
            <person name="Ramos R.A."/>
            <person name="Tobias P.S."/>
            <person name="Ulevitch R.J."/>
            <person name="Mathison J.C."/>
        </authorList>
    </citation>
    <scope>FUNCTION</scope>
    <scope>INTERACTION WITH LBP</scope>
    <scope>SUBCELLULAR LOCATION</scope>
    <scope>TISSUE SPECIFICITY</scope>
</reference>
<reference key="13">
    <citation type="journal article" date="1991" name="Science">
        <title>CD14 and immune response to lipopolysaccharide.</title>
        <authorList>
            <person name="Maliszewski C.R."/>
        </authorList>
    </citation>
    <scope>IDENTIFICATION</scope>
</reference>
<reference key="14">
    <citation type="journal article" date="1996" name="Immunity">
        <title>Resistance to endotoxin shock and reduced dissemination of gram-negative bacteria in CD14-deficient mice.</title>
        <authorList>
            <person name="Haziot A."/>
            <person name="Ferrero E."/>
            <person name="Kontgen F."/>
            <person name="Hijiya N."/>
            <person name="Yamamoto S."/>
            <person name="Silver J."/>
            <person name="Stewart C.L."/>
            <person name="Goyert S.M."/>
        </authorList>
    </citation>
    <scope>FUNCTION</scope>
</reference>
<reference key="15">
    <citation type="journal article" date="2001" name="J. Biol. Chem.">
        <title>Lipopolysaccharide is in close proximity to each of the proteins in its membrane receptor complex. transfer from CD14 to TLR4 and MD-2.</title>
        <authorList>
            <person name="da Silva Correia J."/>
            <person name="Soldau K."/>
            <person name="Christen U."/>
            <person name="Tobias P.S."/>
            <person name="Ulevitch R.J."/>
        </authorList>
    </citation>
    <scope>SUBUNIT</scope>
</reference>
<reference key="16">
    <citation type="journal article" date="2005" name="J. Proteome Res.">
        <title>Human plasma N-glycoproteome analysis by immunoaffinity subtraction, hydrazide chemistry, and mass spectrometry.</title>
        <authorList>
            <person name="Liu T."/>
            <person name="Qian W.-J."/>
            <person name="Gritsenko M.A."/>
            <person name="Camp D.G. II"/>
            <person name="Monroe M.E."/>
            <person name="Moore R.J."/>
            <person name="Smith R.D."/>
        </authorList>
    </citation>
    <scope>GLYCOSYLATION [LARGE SCALE ANALYSIS] AT ASN-151 AND ASN-282</scope>
    <source>
        <tissue>Plasma</tissue>
    </source>
</reference>
<reference key="17">
    <citation type="journal article" date="2006" name="J. Biol. Chem.">
        <title>Membrane sorting of toll-like receptor (TLR)-2/6 and TLR2/1 heterodimers at the cell surface determines heterotypic associations with CD36 and intracellular targeting.</title>
        <authorList>
            <person name="Triantafilou M."/>
            <person name="Gamper F.G."/>
            <person name="Haston R.M."/>
            <person name="Mouratis M.A."/>
            <person name="Morath S."/>
            <person name="Hartung T."/>
            <person name="Triantafilou K."/>
        </authorList>
    </citation>
    <scope>FUNCTION</scope>
    <scope>SUBCELLULAR LOCATION</scope>
    <scope>INTERACTION WITH TLR1; TLR2 AND TLR6</scope>
</reference>
<reference key="18">
    <citation type="journal article" date="2009" name="J. Proteome Res.">
        <title>Glycoproteomics analysis of human liver tissue by combination of multiple enzyme digestion and hydrazide chemistry.</title>
        <authorList>
            <person name="Chen R."/>
            <person name="Jiang X."/>
            <person name="Sun D."/>
            <person name="Han G."/>
            <person name="Wang F."/>
            <person name="Ye M."/>
            <person name="Wang L."/>
            <person name="Zou H."/>
        </authorList>
    </citation>
    <scope>GLYCOSYLATION [LARGE SCALE ANALYSIS] AT ASN-323</scope>
    <source>
        <tissue>Liver</tissue>
    </source>
</reference>
<reference key="19">
    <citation type="journal article" date="2009" name="Nat. Methods">
        <title>Enrichment of glycopeptides for glycan structure and attachment site identification.</title>
        <authorList>
            <person name="Nilsson J."/>
            <person name="Rueetschi U."/>
            <person name="Halim A."/>
            <person name="Hesse C."/>
            <person name="Carlsohn E."/>
            <person name="Brinkmalm G."/>
            <person name="Larson G."/>
        </authorList>
    </citation>
    <scope>GLYCOSYLATION [LARGE SCALE ANALYSIS] AT THR-336</scope>
    <scope>STRUCTURE OF CARBOHYDRATES</scope>
    <source>
        <tissue>Cerebrospinal fluid</tissue>
    </source>
</reference>
<reference key="20">
    <citation type="journal article" date="2010" name="Int. Immunol.">
        <title>Lipopolysaccharide-binding protein-mediated Toll-like receptor 4 dimerization enables rapid signal transduction against lipopolysaccharide stimulation on membrane-associated CD14-expressing cells.</title>
        <authorList>
            <person name="Tsukamoto H."/>
            <person name="Fukudome K."/>
            <person name="Takao S."/>
            <person name="Tsuneyoshi N."/>
            <person name="Kimoto M."/>
        </authorList>
    </citation>
    <scope>FUNCTION</scope>
</reference>
<reference key="21">
    <citation type="journal article" date="2012" name="FEBS Lett.">
        <title>Follistatin-related protein/follistatin-like 1 evokes an innate immune response via CD14 and toll-like receptor 4.</title>
        <authorList>
            <person name="Murakami K."/>
            <person name="Tanaka M."/>
            <person name="Usui T."/>
            <person name="Kawabata D."/>
            <person name="Shiomi A."/>
            <person name="Iguchi-Hashimoto M."/>
            <person name="Shimizu M."/>
            <person name="Yukawa N."/>
            <person name="Yoshifuji H."/>
            <person name="Nojima T."/>
            <person name="Ohmura K."/>
            <person name="Fujii T."/>
            <person name="Umehara H."/>
            <person name="Mimori T."/>
        </authorList>
    </citation>
    <scope>FUNCTION</scope>
    <scope>INTERACTION WITH FSTL1</scope>
</reference>
<reference key="22">
    <citation type="journal article" date="2013" name="Atherosclerosis">
        <title>CD14 and TLR4 mediate cytokine release promoted by electronegative LDL in monocytes.</title>
        <authorList>
            <person name="Estruch M."/>
            <person name="Bancells C."/>
            <person name="Beloki L."/>
            <person name="Sanchez-Quesada J.L."/>
            <person name="Ordonez-Llanos J."/>
            <person name="Benitez S."/>
        </authorList>
    </citation>
    <scope>FUNCTION</scope>
</reference>
<reference key="23">
    <citation type="journal article" date="2014" name="J. Proteomics">
        <title>An enzyme assisted RP-RPLC approach for in-depth analysis of human liver phosphoproteome.</title>
        <authorList>
            <person name="Bian Y."/>
            <person name="Song C."/>
            <person name="Cheng K."/>
            <person name="Dong M."/>
            <person name="Wang F."/>
            <person name="Huang J."/>
            <person name="Sun D."/>
            <person name="Wang L."/>
            <person name="Ye M."/>
            <person name="Zou H."/>
        </authorList>
    </citation>
    <scope>IDENTIFICATION BY MASS SPECTROMETRY [LARGE SCALE ANALYSIS]</scope>
    <source>
        <tissue>Liver</tissue>
    </source>
</reference>
<reference key="24">
    <citation type="journal article" date="2015" name="Biochim. Biophys. Acta">
        <title>27-Hydroxycholesterol up-regulates CD14 and predisposes monocytic cells to superproduction of CCL2 in response to lipopolysaccharide.</title>
        <authorList>
            <person name="Kim S.M."/>
            <person name="Kim B.Y."/>
            <person name="Eo S.K."/>
            <person name="Kim C.D."/>
            <person name="Kim K."/>
        </authorList>
    </citation>
    <scope>SUBCELLULAR LOCATION</scope>
    <scope>INDUCTION BY 27-HYDROXYCHOLESTEROL</scope>
    <scope>TISSUE SPECIFICITY</scope>
</reference>
<reference key="25">
    <citation type="journal article" date="2015" name="PLoS ONE">
        <title>SP-R210 (Myo18A) isoforms as intrinsic modulators of macrophage priming and activation.</title>
        <authorList>
            <person name="Yang L."/>
            <person name="Carrillo M."/>
            <person name="Wu Y.M."/>
            <person name="DiAngelo S.L."/>
            <person name="Silveyra P."/>
            <person name="Umstead T.M."/>
            <person name="Halstead E.S."/>
            <person name="Davies M.L."/>
            <person name="Hu S."/>
            <person name="Floros J."/>
            <person name="McCormack F.X."/>
            <person name="Christensen N.D."/>
            <person name="Chroneos Z.C."/>
        </authorList>
    </citation>
    <scope>INTERACTION WITH MYO18A</scope>
</reference>
<reference key="26">
    <citation type="journal article" date="2013" name="J. Immunol.">
        <title>The crystal structure of human soluble CD14 reveals a bent solenoid with a hydrophobic amino-terminal pocket.</title>
        <authorList>
            <person name="Kelley S.L."/>
            <person name="Lukk T."/>
            <person name="Nair S.K."/>
            <person name="Tapping R.I."/>
        </authorList>
    </citation>
    <scope>X-RAY CRYSTALLOGRAPHY (4.0 ANGSTROMS) OF 26-335</scope>
    <scope>DISULFIDE BONDS</scope>
    <scope>FUNCTION</scope>
    <scope>SUBUNIT</scope>
</reference>
<protein>
    <recommendedName>
        <fullName evidence="20">Monocyte differentiation antigen CD14</fullName>
    </recommendedName>
    <alternativeName>
        <fullName evidence="19">My23 antigen</fullName>
    </alternativeName>
    <alternativeName>
        <fullName>Myeloid cell-specific leucine-rich glycoprotein</fullName>
    </alternativeName>
    <cdAntigenName>CD14</cdAntigenName>
    <component>
        <recommendedName>
            <fullName>Monocyte differentiation antigen CD14, urinary form</fullName>
        </recommendedName>
    </component>
    <component>
        <recommendedName>
            <fullName>Monocyte differentiation antigen CD14, membrane-bound form</fullName>
        </recommendedName>
    </component>
</protein>
<dbReference type="EMBL" id="X06882">
    <property type="protein sequence ID" value="CAA29999.1"/>
    <property type="molecule type" value="Genomic_DNA"/>
</dbReference>
<dbReference type="EMBL" id="X13334">
    <property type="protein sequence ID" value="CAA31711.1"/>
    <property type="molecule type" value="mRNA"/>
</dbReference>
<dbReference type="EMBL" id="M86511">
    <property type="protein sequence ID" value="AAA51930.1"/>
    <property type="molecule type" value="mRNA"/>
</dbReference>
<dbReference type="EMBL" id="AF097942">
    <property type="protein sequence ID" value="AAC83816.1"/>
    <property type="molecule type" value="mRNA"/>
</dbReference>
<dbReference type="EMBL" id="AB446505">
    <property type="protein sequence ID" value="BAG55282.1"/>
    <property type="molecule type" value="mRNA"/>
</dbReference>
<dbReference type="EMBL" id="BT007331">
    <property type="protein sequence ID" value="AAP35995.1"/>
    <property type="molecule type" value="mRNA"/>
</dbReference>
<dbReference type="EMBL" id="CH471062">
    <property type="protein sequence ID" value="EAW62037.1"/>
    <property type="molecule type" value="Genomic_DNA"/>
</dbReference>
<dbReference type="EMBL" id="BC010507">
    <property type="protein sequence ID" value="AAH10507.1"/>
    <property type="molecule type" value="mRNA"/>
</dbReference>
<dbReference type="EMBL" id="AY044269">
    <property type="protein sequence ID" value="AAL02401.1"/>
    <property type="molecule type" value="mRNA"/>
</dbReference>
<dbReference type="CCDS" id="CCDS4232.1"/>
<dbReference type="PIR" id="A27637">
    <property type="entry name" value="TDHUM4"/>
</dbReference>
<dbReference type="RefSeq" id="NP_000582.1">
    <property type="nucleotide sequence ID" value="NM_000591.4"/>
</dbReference>
<dbReference type="RefSeq" id="NP_001035110.1">
    <property type="nucleotide sequence ID" value="NM_001040021.3"/>
</dbReference>
<dbReference type="RefSeq" id="NP_001167575.1">
    <property type="nucleotide sequence ID" value="NM_001174104.2"/>
</dbReference>
<dbReference type="RefSeq" id="NP_001167576.1">
    <property type="nucleotide sequence ID" value="NM_001174105.2"/>
</dbReference>
<dbReference type="PDB" id="4GLP">
    <property type="method" value="X-ray"/>
    <property type="resolution" value="4.00 A"/>
    <property type="chains" value="A=26-335"/>
</dbReference>
<dbReference type="PDBsum" id="4GLP"/>
<dbReference type="SMR" id="P08571"/>
<dbReference type="BioGRID" id="107367">
    <property type="interactions" value="48"/>
</dbReference>
<dbReference type="CORUM" id="P08571"/>
<dbReference type="DIP" id="DIP-1030N"/>
<dbReference type="FunCoup" id="P08571">
    <property type="interactions" value="746"/>
</dbReference>
<dbReference type="IntAct" id="P08571">
    <property type="interactions" value="48"/>
</dbReference>
<dbReference type="MINT" id="P08571"/>
<dbReference type="STRING" id="9606.ENSP00000385519"/>
<dbReference type="ChEMBL" id="CHEMBL2384897"/>
<dbReference type="DrugBank" id="DB06546">
    <property type="generic name" value="Atibuclimab"/>
</dbReference>
<dbReference type="TCDB" id="8.A.43.1.17">
    <property type="family name" value="the neat-domain containing methaemoglobin heme sequestration (n-mhs) family"/>
</dbReference>
<dbReference type="GlyConnect" id="774">
    <property type="glycosylation" value="24 N-Linked glycans (2 sites), 1 O-Linked glycan (1 site)"/>
</dbReference>
<dbReference type="GlyCosmos" id="P08571">
    <property type="glycosylation" value="7 sites, 36 glycans"/>
</dbReference>
<dbReference type="GlyGen" id="P08571">
    <property type="glycosylation" value="7 sites, 47 N-linked glycans (2 sites), 4 O-linked glycans (3 sites)"/>
</dbReference>
<dbReference type="iPTMnet" id="P08571"/>
<dbReference type="PhosphoSitePlus" id="P08571"/>
<dbReference type="SwissPalm" id="P08571"/>
<dbReference type="BioMuta" id="CD14"/>
<dbReference type="DMDM" id="20141203"/>
<dbReference type="CPTAC" id="CPTAC-5944"/>
<dbReference type="jPOST" id="P08571"/>
<dbReference type="MassIVE" id="P08571"/>
<dbReference type="PaxDb" id="9606-ENSP00000304236"/>
<dbReference type="PeptideAtlas" id="P08571"/>
<dbReference type="ProteomicsDB" id="52122"/>
<dbReference type="ABCD" id="P08571">
    <property type="antibodies" value="7 sequenced antibodies"/>
</dbReference>
<dbReference type="Antibodypedia" id="798">
    <property type="antibodies" value="3889 antibodies from 56 providers"/>
</dbReference>
<dbReference type="CPTC" id="P08571">
    <property type="antibodies" value="1 antibody"/>
</dbReference>
<dbReference type="DNASU" id="929"/>
<dbReference type="Ensembl" id="ENST00000302014.11">
    <property type="protein sequence ID" value="ENSP00000304236.6"/>
    <property type="gene ID" value="ENSG00000170458.15"/>
</dbReference>
<dbReference type="Ensembl" id="ENST00000498971.7">
    <property type="protein sequence ID" value="ENSP00000426543.2"/>
    <property type="gene ID" value="ENSG00000170458.15"/>
</dbReference>
<dbReference type="Ensembl" id="ENST00000512545.2">
    <property type="protein sequence ID" value="ENSP00000425447.2"/>
    <property type="gene ID" value="ENSG00000170458.15"/>
</dbReference>
<dbReference type="Ensembl" id="ENST00000519715.2">
    <property type="protein sequence ID" value="ENSP00000430884.2"/>
    <property type="gene ID" value="ENSG00000170458.15"/>
</dbReference>
<dbReference type="GeneID" id="929"/>
<dbReference type="KEGG" id="hsa:929"/>
<dbReference type="MANE-Select" id="ENST00000302014.11">
    <property type="protein sequence ID" value="ENSP00000304236.6"/>
    <property type="RefSeq nucleotide sequence ID" value="NM_000591.4"/>
    <property type="RefSeq protein sequence ID" value="NP_000582.1"/>
</dbReference>
<dbReference type="UCSC" id="uc003lgi.3">
    <property type="organism name" value="human"/>
</dbReference>
<dbReference type="AGR" id="HGNC:1628"/>
<dbReference type="CTD" id="929"/>
<dbReference type="DisGeNET" id="929"/>
<dbReference type="GeneCards" id="CD14"/>
<dbReference type="HGNC" id="HGNC:1628">
    <property type="gene designation" value="CD14"/>
</dbReference>
<dbReference type="HPA" id="ENSG00000170458">
    <property type="expression patterns" value="Tissue enhanced (liver)"/>
</dbReference>
<dbReference type="MalaCards" id="CD14"/>
<dbReference type="MIM" id="158120">
    <property type="type" value="gene"/>
</dbReference>
<dbReference type="neXtProt" id="NX_P08571"/>
<dbReference type="OpenTargets" id="ENSG00000170458"/>
<dbReference type="PharmGKB" id="PA26188"/>
<dbReference type="VEuPathDB" id="HostDB:ENSG00000170458"/>
<dbReference type="eggNOG" id="ENOG502SNYQ">
    <property type="taxonomic scope" value="Eukaryota"/>
</dbReference>
<dbReference type="GeneTree" id="ENSGT00390000005689"/>
<dbReference type="HOGENOM" id="CLU_062152_0_0_1"/>
<dbReference type="InParanoid" id="P08571"/>
<dbReference type="OMA" id="SSSCQWP"/>
<dbReference type="OrthoDB" id="676979at2759"/>
<dbReference type="PAN-GO" id="P08571">
    <property type="GO annotations" value="10 GO annotations based on evolutionary models"/>
</dbReference>
<dbReference type="PhylomeDB" id="P08571"/>
<dbReference type="TreeFam" id="TF338550"/>
<dbReference type="PathwayCommons" id="P08571"/>
<dbReference type="Reactome" id="R-HSA-1236974">
    <property type="pathway name" value="ER-Phagosome pathway"/>
</dbReference>
<dbReference type="Reactome" id="R-HSA-140534">
    <property type="pathway name" value="Caspase activation via Death Receptors in the presence of ligand"/>
</dbReference>
<dbReference type="Reactome" id="R-HSA-166016">
    <property type="pathway name" value="Toll Like Receptor 4 (TLR4) Cascade"/>
</dbReference>
<dbReference type="Reactome" id="R-HSA-166020">
    <property type="pathway name" value="Transfer of LPS from LBP carrier to CD14"/>
</dbReference>
<dbReference type="Reactome" id="R-HSA-166058">
    <property type="pathway name" value="MyD88:MAL(TIRAP) cascade initiated on plasma membrane"/>
</dbReference>
<dbReference type="Reactome" id="R-HSA-166166">
    <property type="pathway name" value="MyD88-independent TLR4 cascade"/>
</dbReference>
<dbReference type="Reactome" id="R-HSA-168179">
    <property type="pathway name" value="Toll Like Receptor TLR1:TLR2 Cascade"/>
</dbReference>
<dbReference type="Reactome" id="R-HSA-168188">
    <property type="pathway name" value="Toll Like Receptor TLR6:TLR2 Cascade"/>
</dbReference>
<dbReference type="Reactome" id="R-HSA-2562578">
    <property type="pathway name" value="TRIF-mediated programmed cell death"/>
</dbReference>
<dbReference type="Reactome" id="R-HSA-5602498">
    <property type="pathway name" value="MyD88 deficiency (TLR2/4)"/>
</dbReference>
<dbReference type="Reactome" id="R-HSA-5603041">
    <property type="pathway name" value="IRAK4 deficiency (TLR2/4)"/>
</dbReference>
<dbReference type="Reactome" id="R-HSA-5686938">
    <property type="pathway name" value="Regulation of TLR by endogenous ligand"/>
</dbReference>
<dbReference type="Reactome" id="R-HSA-6798695">
    <property type="pathway name" value="Neutrophil degranulation"/>
</dbReference>
<dbReference type="Reactome" id="R-HSA-936964">
    <property type="pathway name" value="Activation of IRF3, IRF7 mediated by TBK1, IKKEpsilon (IKBKE)"/>
</dbReference>
<dbReference type="Reactome" id="R-HSA-937041">
    <property type="pathway name" value="IKK complex recruitment mediated by RIP1"/>
</dbReference>
<dbReference type="Reactome" id="R-HSA-937072">
    <property type="pathway name" value="TRAF6-mediated induction of TAK1 complex within TLR4 complex"/>
</dbReference>
<dbReference type="Reactome" id="R-HSA-975163">
    <property type="pathway name" value="IRAK2 mediated activation of TAK1 complex upon TLR7/8 or 9 stimulation"/>
</dbReference>
<dbReference type="Reactome" id="R-HSA-9820960">
    <property type="pathway name" value="Respiratory syncytial virus (RSV) attachment and entry"/>
</dbReference>
<dbReference type="Reactome" id="R-HSA-9824878">
    <property type="pathway name" value="Regulation of TBK1, IKKEpsilon (IKBKE)-mediated activation of IRF3, IRF7"/>
</dbReference>
<dbReference type="Reactome" id="R-HSA-9833110">
    <property type="pathway name" value="RSV-host interactions"/>
</dbReference>
<dbReference type="SignaLink" id="P08571"/>
<dbReference type="SIGNOR" id="P08571"/>
<dbReference type="BioGRID-ORCS" id="929">
    <property type="hits" value="18 hits in 1159 CRISPR screens"/>
</dbReference>
<dbReference type="ChiTaRS" id="CD14">
    <property type="organism name" value="human"/>
</dbReference>
<dbReference type="EvolutionaryTrace" id="P08571"/>
<dbReference type="GeneWiki" id="CD14"/>
<dbReference type="GenomeRNAi" id="929"/>
<dbReference type="Pharos" id="P08571">
    <property type="development level" value="Tbio"/>
</dbReference>
<dbReference type="PRO" id="PR:P08571"/>
<dbReference type="Proteomes" id="UP000005640">
    <property type="component" value="Chromosome 5"/>
</dbReference>
<dbReference type="RNAct" id="P08571">
    <property type="molecule type" value="protein"/>
</dbReference>
<dbReference type="Bgee" id="ENSG00000170458">
    <property type="expression patterns" value="Expressed in monocyte and 186 other cell types or tissues"/>
</dbReference>
<dbReference type="ExpressionAtlas" id="P08571">
    <property type="expression patterns" value="baseline and differential"/>
</dbReference>
<dbReference type="GO" id="GO:0010008">
    <property type="term" value="C:endosome membrane"/>
    <property type="evidence" value="ECO:0000304"/>
    <property type="project" value="Reactome"/>
</dbReference>
<dbReference type="GO" id="GO:0009897">
    <property type="term" value="C:external side of plasma membrane"/>
    <property type="evidence" value="ECO:0000314"/>
    <property type="project" value="UniProtKB"/>
</dbReference>
<dbReference type="GO" id="GO:0070062">
    <property type="term" value="C:extracellular exosome"/>
    <property type="evidence" value="ECO:0007005"/>
    <property type="project" value="UniProtKB"/>
</dbReference>
<dbReference type="GO" id="GO:0005576">
    <property type="term" value="C:extracellular region"/>
    <property type="evidence" value="ECO:0000304"/>
    <property type="project" value="Reactome"/>
</dbReference>
<dbReference type="GO" id="GO:0005615">
    <property type="term" value="C:extracellular space"/>
    <property type="evidence" value="ECO:0000314"/>
    <property type="project" value="UniProt"/>
</dbReference>
<dbReference type="GO" id="GO:0005794">
    <property type="term" value="C:Golgi apparatus"/>
    <property type="evidence" value="ECO:0000314"/>
    <property type="project" value="UniProtKB"/>
</dbReference>
<dbReference type="GO" id="GO:0046696">
    <property type="term" value="C:lipopolysaccharide receptor complex"/>
    <property type="evidence" value="ECO:0000314"/>
    <property type="project" value="UniProtKB"/>
</dbReference>
<dbReference type="GO" id="GO:0045121">
    <property type="term" value="C:membrane raft"/>
    <property type="evidence" value="ECO:0000314"/>
    <property type="project" value="UniProtKB"/>
</dbReference>
<dbReference type="GO" id="GO:0005886">
    <property type="term" value="C:plasma membrane"/>
    <property type="evidence" value="ECO:0000304"/>
    <property type="project" value="Reactome"/>
</dbReference>
<dbReference type="GO" id="GO:0030667">
    <property type="term" value="C:secretory granule membrane"/>
    <property type="evidence" value="ECO:0000304"/>
    <property type="project" value="Reactome"/>
</dbReference>
<dbReference type="GO" id="GO:0001530">
    <property type="term" value="F:lipopolysaccharide binding"/>
    <property type="evidence" value="ECO:0000314"/>
    <property type="project" value="MGI"/>
</dbReference>
<dbReference type="GO" id="GO:0001875">
    <property type="term" value="F:lipopolysaccharide immune receptor activity"/>
    <property type="evidence" value="ECO:0000314"/>
    <property type="project" value="AgBase"/>
</dbReference>
<dbReference type="GO" id="GO:0070891">
    <property type="term" value="F:lipoteichoic acid binding"/>
    <property type="evidence" value="ECO:0000314"/>
    <property type="project" value="MGI"/>
</dbReference>
<dbReference type="GO" id="GO:0140104">
    <property type="term" value="F:molecular carrier activity"/>
    <property type="evidence" value="ECO:0000314"/>
    <property type="project" value="UniProt"/>
</dbReference>
<dbReference type="GO" id="GO:0001847">
    <property type="term" value="F:opsonin receptor activity"/>
    <property type="evidence" value="ECO:0000304"/>
    <property type="project" value="BHF-UCL"/>
</dbReference>
<dbReference type="GO" id="GO:0016019">
    <property type="term" value="F:peptidoglycan immune receptor activity"/>
    <property type="evidence" value="ECO:0000304"/>
    <property type="project" value="ProtInc"/>
</dbReference>
<dbReference type="GO" id="GO:0006915">
    <property type="term" value="P:apoptotic process"/>
    <property type="evidence" value="ECO:0000304"/>
    <property type="project" value="ProtInc"/>
</dbReference>
<dbReference type="GO" id="GO:0002752">
    <property type="term" value="P:cell surface pattern recognition receptor signaling pathway"/>
    <property type="evidence" value="ECO:0000314"/>
    <property type="project" value="AgBase"/>
</dbReference>
<dbReference type="GO" id="GO:0007166">
    <property type="term" value="P:cell surface receptor signaling pathway"/>
    <property type="evidence" value="ECO:0000304"/>
    <property type="project" value="ProtInc"/>
</dbReference>
<dbReference type="GO" id="GO:0071726">
    <property type="term" value="P:cellular response to diacyl bacterial lipopeptide"/>
    <property type="evidence" value="ECO:0000314"/>
    <property type="project" value="UniProtKB"/>
</dbReference>
<dbReference type="GO" id="GO:0071222">
    <property type="term" value="P:cellular response to lipopolysaccharide"/>
    <property type="evidence" value="ECO:0000314"/>
    <property type="project" value="MGI"/>
</dbReference>
<dbReference type="GO" id="GO:0071223">
    <property type="term" value="P:cellular response to lipoteichoic acid"/>
    <property type="evidence" value="ECO:0000314"/>
    <property type="project" value="MGI"/>
</dbReference>
<dbReference type="GO" id="GO:0071219">
    <property type="term" value="P:cellular response to molecule of bacterial origin"/>
    <property type="evidence" value="ECO:0000314"/>
    <property type="project" value="CAFA"/>
</dbReference>
<dbReference type="GO" id="GO:0071727">
    <property type="term" value="P:cellular response to triacyl bacterial lipopeptide"/>
    <property type="evidence" value="ECO:0000314"/>
    <property type="project" value="UniProtKB"/>
</dbReference>
<dbReference type="GO" id="GO:0006954">
    <property type="term" value="P:inflammatory response"/>
    <property type="evidence" value="ECO:0007669"/>
    <property type="project" value="UniProtKB-KW"/>
</dbReference>
<dbReference type="GO" id="GO:0045087">
    <property type="term" value="P:innate immune response"/>
    <property type="evidence" value="ECO:0007669"/>
    <property type="project" value="UniProtKB-KW"/>
</dbReference>
<dbReference type="GO" id="GO:0006909">
    <property type="term" value="P:phagocytosis"/>
    <property type="evidence" value="ECO:0000304"/>
    <property type="project" value="ProtInc"/>
</dbReference>
<dbReference type="GO" id="GO:0001819">
    <property type="term" value="P:positive regulation of cytokine production"/>
    <property type="evidence" value="ECO:0000318"/>
    <property type="project" value="GO_Central"/>
</dbReference>
<dbReference type="GO" id="GO:0045807">
    <property type="term" value="P:positive regulation of endocytosis"/>
    <property type="evidence" value="ECO:0007669"/>
    <property type="project" value="Ensembl"/>
</dbReference>
<dbReference type="GO" id="GO:0032757">
    <property type="term" value="P:positive regulation of interleukin-8 production"/>
    <property type="evidence" value="ECO:0000315"/>
    <property type="project" value="CAFA"/>
</dbReference>
<dbReference type="GO" id="GO:0031666">
    <property type="term" value="P:positive regulation of lipopolysaccharide-mediated signaling pathway"/>
    <property type="evidence" value="ECO:0007669"/>
    <property type="project" value="Ensembl"/>
</dbReference>
<dbReference type="GO" id="GO:0034145">
    <property type="term" value="P:positive regulation of toll-like receptor 4 signaling pathway"/>
    <property type="evidence" value="ECO:0000250"/>
    <property type="project" value="UniProtKB"/>
</dbReference>
<dbReference type="GO" id="GO:0032760">
    <property type="term" value="P:positive regulation of tumor necrosis factor production"/>
    <property type="evidence" value="ECO:0000314"/>
    <property type="project" value="MGI"/>
</dbReference>
<dbReference type="GO" id="GO:0032481">
    <property type="term" value="P:positive regulation of type I interferon production"/>
    <property type="evidence" value="ECO:0007669"/>
    <property type="project" value="Ensembl"/>
</dbReference>
<dbReference type="GO" id="GO:0032729">
    <property type="term" value="P:positive regulation of type II interferon production"/>
    <property type="evidence" value="ECO:0000250"/>
    <property type="project" value="UniProtKB"/>
</dbReference>
<dbReference type="GO" id="GO:0006898">
    <property type="term" value="P:receptor-mediated endocytosis"/>
    <property type="evidence" value="ECO:0007669"/>
    <property type="project" value="Ensembl"/>
</dbReference>
<dbReference type="GO" id="GO:0034142">
    <property type="term" value="P:toll-like receptor 4 signaling pathway"/>
    <property type="evidence" value="ECO:0000314"/>
    <property type="project" value="UniProt"/>
</dbReference>
<dbReference type="FunFam" id="3.80.10.10:FF:000244">
    <property type="entry name" value="Monocyte differentiation antigen CD14"/>
    <property type="match status" value="1"/>
</dbReference>
<dbReference type="Gene3D" id="3.80.10.10">
    <property type="entry name" value="Ribonuclease Inhibitor"/>
    <property type="match status" value="1"/>
</dbReference>
<dbReference type="InterPro" id="IPR001611">
    <property type="entry name" value="Leu-rich_rpt"/>
</dbReference>
<dbReference type="InterPro" id="IPR032675">
    <property type="entry name" value="LRR_dom_sf"/>
</dbReference>
<dbReference type="InterPro" id="IPR016337">
    <property type="entry name" value="Monocyte_diff_Ag_CD14"/>
</dbReference>
<dbReference type="PANTHER" id="PTHR10630">
    <property type="entry name" value="MONOCYTE DIFFERENTIATION ANTIGEN CD14"/>
    <property type="match status" value="1"/>
</dbReference>
<dbReference type="PANTHER" id="PTHR10630:SF3">
    <property type="entry name" value="MONOCYTE DIFFERENTIATION ANTIGEN CD14"/>
    <property type="match status" value="1"/>
</dbReference>
<dbReference type="Pfam" id="PF13516">
    <property type="entry name" value="LRR_6"/>
    <property type="match status" value="1"/>
</dbReference>
<dbReference type="PIRSF" id="PIRSF002017">
    <property type="entry name" value="CD14"/>
    <property type="match status" value="1"/>
</dbReference>
<dbReference type="SUPFAM" id="SSF52058">
    <property type="entry name" value="L domain-like"/>
    <property type="match status" value="1"/>
</dbReference>
<dbReference type="PROSITE" id="PS51450">
    <property type="entry name" value="LRR"/>
    <property type="match status" value="1"/>
</dbReference>
<comment type="function">
    <text evidence="5 6 9 10 11 12 18">Coreceptor for bacterial lipopolysaccharide (PubMed:1698311, PubMed:23264655). In concert with LBP, binds to monomeric lipopolysaccharide and delivers it to the LY96/TLR4 complex, thereby mediating the innate immune response to bacterial lipopolysaccharide (LPS) (PubMed:20133493, PubMed:22265692, PubMed:23264655). Acts via MyD88, TIRAP and TRAF6, leading to NF-kappa-B activation, cytokine secretion and the inflammatory response (PubMed:8612135). Acts as a coreceptor for TLR2:TLR6 heterodimer in response to diacylated lipopeptides and for TLR2:TLR1 heterodimer in response to triacylated lipopeptides, these clusters trigger signaling from the cell surface and subsequently are targeted to the Golgi in a lipid-raft dependent pathway (PubMed:16880211). Binds electronegative LDL (LDL(-)) and mediates the cytokine release induced by LDL(-) (PubMed:23880187).</text>
</comment>
<comment type="subunit">
    <text evidence="1 3 5 6 10 11 15">Interacts with LPS-bound LPB (PubMed:1698311, PubMed:23264655). Belongs to the lipopolysaccharide (LPS) receptor, a multi-protein complex containing at least CD14, LY96 and TLR4 (PubMed:11274165). Interacts with LPAR1 (By similarity). Interacts with the TLR2:TLR6 or TLR2:TLR1 heterodimers; upon interaction with ligands such as diacylated lipopeptides and triacylated lipopeptides, respectively (PubMed:16880211). Interacts with MYO18A (PubMed:25965346). Interacts with FSTL1 (PubMed:22265692).</text>
</comment>
<comment type="interaction">
    <interactant intactId="EBI-3905196">
        <id>P08571</id>
    </interactant>
    <interactant intactId="EBI-2349801">
        <id>Q12841</id>
        <label>FSTL1</label>
    </interactant>
    <organismsDiffer>false</organismsDiffer>
    <experiments>3</experiments>
</comment>
<comment type="subcellular location">
    <subcellularLocation>
        <location evidence="6 13 17">Cell membrane</location>
        <topology evidence="6 13 17">Lipid-anchor</topology>
        <topology evidence="6 13 17">GPI-anchor</topology>
    </subcellularLocation>
    <subcellularLocation>
        <location evidence="14 16">Secreted</location>
    </subcellularLocation>
    <subcellularLocation>
        <location evidence="5">Membrane raft</location>
    </subcellularLocation>
    <subcellularLocation>
        <location evidence="5">Golgi apparatus</location>
    </subcellularLocation>
    <text evidence="13 16 17">Secreted forms may arise by cleavage of the GPI anchor.</text>
</comment>
<comment type="tissue specificity">
    <text evidence="6 14">Detected on macrophages (at protein level) (PubMed:1698311). Expressed strongly on the surface of monocytes and weakly on the surface of granulocytes; also expressed by most tissue macrophages.</text>
</comment>
<comment type="induction">
    <text evidence="14">The expression in monocytes is highly induced by 27-hydroxycholesterol, priming monocytes/macrophages such that LPS-mediated inflammatory reaction is accelerated. Secretion of soluble CD14 is also enhanced.</text>
</comment>
<comment type="domain">
    <text evidence="1">The C-terminal leucine-rich repeat (LRR) region is required for responses to smooth LPS.</text>
</comment>
<comment type="PTM">
    <text evidence="4 7 8">N- and O- glycosylated. O-glycosylated with a core 1 or possibly core 8 glycan.</text>
</comment>
<comment type="online information" name="Wikipedia">
    <link uri="https://en.wikipedia.org/wiki/CD14"/>
    <text>CD14 entry</text>
</comment>
<evidence type="ECO:0000250" key="1">
    <source>
        <dbReference type="UniProtKB" id="P10810"/>
    </source>
</evidence>
<evidence type="ECO:0000255" key="2"/>
<evidence type="ECO:0000269" key="3">
    <source>
    </source>
</evidence>
<evidence type="ECO:0000269" key="4">
    <source>
    </source>
</evidence>
<evidence type="ECO:0000269" key="5">
    <source>
    </source>
</evidence>
<evidence type="ECO:0000269" key="6">
    <source>
    </source>
</evidence>
<evidence type="ECO:0000269" key="7">
    <source>
    </source>
</evidence>
<evidence type="ECO:0000269" key="8">
    <source>
    </source>
</evidence>
<evidence type="ECO:0000269" key="9">
    <source>
    </source>
</evidence>
<evidence type="ECO:0000269" key="10">
    <source>
    </source>
</evidence>
<evidence type="ECO:0000269" key="11">
    <source>
    </source>
</evidence>
<evidence type="ECO:0000269" key="12">
    <source>
    </source>
</evidence>
<evidence type="ECO:0000269" key="13">
    <source>
    </source>
</evidence>
<evidence type="ECO:0000269" key="14">
    <source>
    </source>
</evidence>
<evidence type="ECO:0000269" key="15">
    <source>
    </source>
</evidence>
<evidence type="ECO:0000269" key="16">
    <source>
    </source>
</evidence>
<evidence type="ECO:0000269" key="17">
    <source>
    </source>
</evidence>
<evidence type="ECO:0000269" key="18">
    <source>
    </source>
</evidence>
<evidence type="ECO:0000303" key="19">
    <source>
    </source>
</evidence>
<evidence type="ECO:0000303" key="20">
    <source>
    </source>
</evidence>
<evidence type="ECO:0000305" key="21"/>
<gene>
    <name type="primary">CD14</name>
</gene>
<feature type="signal peptide">
    <location>
        <begin position="1"/>
        <end position="19"/>
    </location>
</feature>
<feature type="chain" id="PRO_0000020884" description="Monocyte differentiation antigen CD14, urinary form">
    <location>
        <begin position="20"/>
        <end position="367"/>
    </location>
</feature>
<feature type="chain" id="PRO_0000020885" description="Monocyte differentiation antigen CD14, membrane-bound form">
    <location>
        <begin position="20"/>
        <end position="345"/>
    </location>
</feature>
<feature type="propeptide" id="PRO_0000020886" description="Removed in mature form" evidence="2">
    <location>
        <begin position="346"/>
        <end position="375"/>
    </location>
</feature>
<feature type="repeat" description="LRR 1">
    <location>
        <begin position="54"/>
        <end position="82"/>
    </location>
</feature>
<feature type="repeat" description="LRR 2">
    <location>
        <begin position="83"/>
        <end position="118"/>
    </location>
</feature>
<feature type="repeat" description="LRR 3">
    <location>
        <begin position="119"/>
        <end position="144"/>
    </location>
</feature>
<feature type="repeat" description="LRR 4">
    <location>
        <begin position="145"/>
        <end position="172"/>
    </location>
</feature>
<feature type="repeat" description="LRR 5">
    <location>
        <begin position="173"/>
        <end position="196"/>
    </location>
</feature>
<feature type="repeat" description="LRR 6">
    <location>
        <begin position="197"/>
        <end position="224"/>
    </location>
</feature>
<feature type="repeat" description="LRR 7">
    <location>
        <begin position="225"/>
        <end position="251"/>
    </location>
</feature>
<feature type="repeat" description="LRR 8">
    <location>
        <begin position="252"/>
        <end position="278"/>
    </location>
</feature>
<feature type="repeat" description="LRR 9">
    <location>
        <begin position="279"/>
        <end position="299"/>
    </location>
</feature>
<feature type="repeat" description="LRR 10">
    <location>
        <begin position="300"/>
        <end position="321"/>
    </location>
</feature>
<feature type="repeat" description="LRR 11">
    <location>
        <begin position="322"/>
        <end position="349"/>
    </location>
</feature>
<feature type="region of interest" description="Required for response to bacterial lipopolysaccharide (LPS)" evidence="1">
    <location>
        <begin position="290"/>
        <end position="375"/>
    </location>
</feature>
<feature type="lipid moiety-binding region" description="GPI-anchor amidated asparagine" evidence="2">
    <location>
        <position position="345"/>
    </location>
</feature>
<feature type="glycosylation site" description="N-linked (GlcNAc...) asparagine" evidence="2">
    <location>
        <position position="37"/>
    </location>
</feature>
<feature type="glycosylation site" description="N-linked (GlcNAc...) asparagine" evidence="4">
    <location>
        <position position="151"/>
    </location>
</feature>
<feature type="glycosylation site" description="N-linked (GlcNAc...) asparagine" evidence="4">
    <location>
        <position position="282"/>
    </location>
</feature>
<feature type="glycosylation site" description="N-linked (GlcNAc...) asparagine" evidence="7">
    <location>
        <position position="323"/>
    </location>
</feature>
<feature type="glycosylation site" description="O-linked (GalNAc...) threonine" evidence="8">
    <location>
        <position position="336"/>
    </location>
</feature>
<feature type="disulfide bond" evidence="11">
    <location>
        <begin position="25"/>
        <end position="36"/>
    </location>
</feature>
<feature type="disulfide bond" evidence="11">
    <location>
        <begin position="34"/>
        <end position="51"/>
    </location>
</feature>
<feature type="disulfide bond" evidence="11">
    <location>
        <begin position="187"/>
        <end position="217"/>
    </location>
</feature>
<feature type="disulfide bond" evidence="11">
    <location>
        <begin position="241"/>
        <end position="272"/>
    </location>
</feature>
<feature type="sequence variant" id="VAR_024302" description="In dbSNP:rs2228049.">
    <original>N</original>
    <variation>D</variation>
    <location>
        <position position="204"/>
    </location>
</feature>
<feature type="sequence variant" id="VAR_050771" description="In dbSNP:rs11556179.">
    <original>E</original>
    <variation>K</variation>
    <location>
        <position position="341"/>
    </location>
</feature>
<feature type="sequence conflict" description="In Ref. 2; CAA29999." evidence="21" ref="2">
    <original>C</original>
    <variation>Y</variation>
    <location>
        <position position="187"/>
    </location>
</feature>
<feature type="sequence conflict" description="In Ref. 5; AAC83816." evidence="21" ref="5">
    <original>D</original>
    <variation>E</variation>
    <location>
        <position position="303"/>
    </location>
</feature>
<proteinExistence type="evidence at protein level"/>
<accession>P08571</accession>
<accession>Q53XT5</accession>
<accession>Q96FR6</accession>
<accession>Q96L99</accession>
<accession>Q9UNS3</accession>